<reference key="1">
    <citation type="journal article" date="1997" name="Biochem. J.">
        <title>Identification and characterization of a novel A-kinase-anchoring protein (AKAP120) from rabbit gastric parietal cells.</title>
        <authorList>
            <person name="Dransfield D.T."/>
            <person name="Yeh J.L."/>
            <person name="Bradford A.J."/>
            <person name="Goldenring J.R."/>
        </authorList>
    </citation>
    <scope>NUCLEOTIDE SEQUENCE [MRNA]</scope>
    <scope>TISSUE SPECIFICITY</scope>
    <source>
        <strain>New Zealand white</strain>
        <tissue>Gastric parietal cell</tissue>
    </source>
</reference>
<protein>
    <recommendedName>
        <fullName>A-kinase anchor protein 9</fullName>
        <shortName>AKAP-9</shortName>
    </recommendedName>
    <alternativeName>
        <fullName>A-kinase anchor protein 120 kDa</fullName>
        <shortName>AKAP 120</shortName>
    </alternativeName>
    <alternativeName>
        <fullName>Protein kinase A-anchoring protein 9</fullName>
        <shortName>PRKA9</shortName>
    </alternativeName>
</protein>
<name>AKAP9_RABIT</name>
<gene>
    <name type="primary">AKAP9</name>
    <name type="synonym">AKAP120</name>
</gene>
<dbReference type="EMBL" id="U26360">
    <property type="protein sequence ID" value="AAC35413.1"/>
    <property type="status" value="ALT_INIT"/>
    <property type="molecule type" value="mRNA"/>
</dbReference>
<dbReference type="RefSeq" id="NP_001075820.1">
    <property type="nucleotide sequence ID" value="NM_001082351.1"/>
</dbReference>
<dbReference type="SMR" id="Q28628"/>
<dbReference type="STRING" id="9986.ENSOCUP00000003916"/>
<dbReference type="GeneID" id="100009203"/>
<dbReference type="KEGG" id="ocu:100009203"/>
<dbReference type="CTD" id="10142"/>
<dbReference type="eggNOG" id="ENOG502QV16">
    <property type="taxonomic scope" value="Eukaryota"/>
</dbReference>
<dbReference type="InParanoid" id="Q28628"/>
<dbReference type="OrthoDB" id="2020852at2759"/>
<dbReference type="Proteomes" id="UP000001811">
    <property type="component" value="Unplaced"/>
</dbReference>
<dbReference type="GO" id="GO:0005813">
    <property type="term" value="C:centrosome"/>
    <property type="evidence" value="ECO:0000250"/>
    <property type="project" value="UniProtKB"/>
</dbReference>
<dbReference type="GO" id="GO:0005801">
    <property type="term" value="C:cis-Golgi network"/>
    <property type="evidence" value="ECO:0007669"/>
    <property type="project" value="TreeGrafter"/>
</dbReference>
<dbReference type="GO" id="GO:0005794">
    <property type="term" value="C:Golgi apparatus"/>
    <property type="evidence" value="ECO:0000250"/>
    <property type="project" value="UniProtKB"/>
</dbReference>
<dbReference type="GO" id="GO:0005795">
    <property type="term" value="C:Golgi stack"/>
    <property type="evidence" value="ECO:0000250"/>
    <property type="project" value="UniProtKB"/>
</dbReference>
<dbReference type="GO" id="GO:0097060">
    <property type="term" value="C:synaptic membrane"/>
    <property type="evidence" value="ECO:0007669"/>
    <property type="project" value="TreeGrafter"/>
</dbReference>
<dbReference type="GO" id="GO:0060090">
    <property type="term" value="F:molecular adaptor activity"/>
    <property type="evidence" value="ECO:0000250"/>
    <property type="project" value="UniProtKB"/>
</dbReference>
<dbReference type="GO" id="GO:0015459">
    <property type="term" value="F:potassium channel regulator activity"/>
    <property type="evidence" value="ECO:0007669"/>
    <property type="project" value="TreeGrafter"/>
</dbReference>
<dbReference type="GO" id="GO:0034237">
    <property type="term" value="F:protein kinase A regulatory subunit binding"/>
    <property type="evidence" value="ECO:0007669"/>
    <property type="project" value="TreeGrafter"/>
</dbReference>
<dbReference type="GO" id="GO:0051661">
    <property type="term" value="P:maintenance of centrosome location"/>
    <property type="evidence" value="ECO:0000250"/>
    <property type="project" value="UniProtKB"/>
</dbReference>
<dbReference type="GO" id="GO:0007020">
    <property type="term" value="P:microtubule nucleation"/>
    <property type="evidence" value="ECO:0000250"/>
    <property type="project" value="UniProtKB"/>
</dbReference>
<dbReference type="GO" id="GO:1903358">
    <property type="term" value="P:regulation of Golgi organization"/>
    <property type="evidence" value="ECO:0000250"/>
    <property type="project" value="UniProtKB"/>
</dbReference>
<dbReference type="GO" id="GO:0060307">
    <property type="term" value="P:regulation of ventricular cardiac muscle cell membrane repolarization"/>
    <property type="evidence" value="ECO:0007669"/>
    <property type="project" value="TreeGrafter"/>
</dbReference>
<dbReference type="GO" id="GO:0007165">
    <property type="term" value="P:signal transduction"/>
    <property type="evidence" value="ECO:0007669"/>
    <property type="project" value="InterPro"/>
</dbReference>
<dbReference type="InterPro" id="IPR028745">
    <property type="entry name" value="AKAP9/Pericentrin"/>
</dbReference>
<dbReference type="PANTHER" id="PTHR44981:SF1">
    <property type="entry name" value="A-KINASE ANCHOR PROTEIN 9"/>
    <property type="match status" value="1"/>
</dbReference>
<dbReference type="PANTHER" id="PTHR44981">
    <property type="entry name" value="PERICENTRIN-LIKE PROTEIN, ISOFORM F"/>
    <property type="match status" value="1"/>
</dbReference>
<sequence>REKLEVQCQAEKVRDDLQKQVKALEIDVEEQVCRFIELEQEKNAELMDLRQQNQALEKQLEKMRKMDLRQQNQALEKQLEKMRKFLDEQAIDREHERDVFQQEIQKLEQQLKLVPRFQPISEHQTREVEQLTNHLKEKTDKCSELLLSKEQLQRDVQERNEEIEKLECRVRELEQALLSVQTLSKRWRTRNSFGAVEPKAELCLEVQLQAERDAIDRKEKEITNLEEQLEQFREELENKNEEVQQLHMQLEIQKKESTTRLQELEQENKLFKDEMEKLGFAIKESDAVSPQDQQVLFGKFAQIIHEKEVEIDRLNEQIIKLQQQLKITTDNKVIEEKNELIRDLEAQIECLMSDQERVRKNREEEIEQLNEVIEKLQQELANIDQKTSVDPSSLSEEADSLKHQLDKVIAEKLALEHQVETTNEEMAVTKNVLKETNFKMNQLTQELCSLKREREKMERIQSVPEKSVNMSVGDLSKDKPEMDLIPTEDALAQLETQTQLRSSEESSKVSLSSLETKLLQLESTVSTKDLELTQCYKQIQDMREQGRSETEMLQTKIVSLQKVLEEKVAAALVSQVQLEAVQEYVKLCADKPAVSSDPARTEVPGLSQLAGNTMESDVSALTWRISELESQLVEMHSSLISEKEQVEIAEKNALEKEKKLQELQKLVQDSETKQRERERQSRLHGDLGVLESTTSEESGVFGELEALRAESAAPKGELANYKELAEKLQEELLVKETNMASLPKELSHVRDQLTEAEDKLSHFSEKEDKTEVQEHGTICILEPCPGQIGESFASQTEGAVQVNSHTQTPQIPVRSVGIQTHSQSDSSPEEVAEIISRFTEKIEQMRELHAAEILDMESRHISETETLKREHCIAVQLLTEECASLKSLIQGLRMPEGSSVPELTHSNAYQTREVGSSDSGSDWGQGIYLTQSQGFDTASEARGEEGETSTDSFPKKIKGLLRAVHNEGMQVLSLTEGPCGDGEDYPGHQLSESWLEERRAYLSTISSLKDFITKMQVQREVEVYDSSQSHENISDWRGELLLALQQVFLRERSVLLAAFKTELTALGTRDAAGLLNCLEQRIPRTEY</sequence>
<proteinExistence type="evidence at transcript level"/>
<comment type="function">
    <text evidence="1">Scaffolding protein that assembles several protein kinases and phosphatases on the centrosome and Golgi apparatus. Required to maintain the integrity of the Golgi apparatus. Required for microtubule nucleation at the cis-side of the Golgi apparatus. Required for association of the centrosomes with the poles of the bipolar mitotic spindle during metaphase. In complex with PDE4DIP, recruits CAMSAP2 to the Golgi apparatus and tethers non-centrosomal minus-end microtubules to the Golgi, an important step for polarized cell movement. In complex with PDE4DIP, EB1/MAPRE1 and CDK5RAP2, contributes to microtubules nucleation and extension also from the centrosome to the cell periphery. The interaction with PDE4DIP is isoform-specific.</text>
</comment>
<comment type="subunit">
    <text evidence="1">Interacts with the regulatory region of protein kinase N (PKN), protein phosphatase 2A (PP2A), protein phosphatase 1 (PP1) and the immature non-phosphorylated form of PKC epsilon. Interacts with CIP4 and FNBP1. Interacts with chloride intracellular channel proteins CLIC1, CLIC4 and CLIC5. CSNK1D binding promotes its centrosomal subcellular location. Interacts with GM130/GOLGA2; leading to recruitment to the Golgi apparatus. Interacts with KCNQ1; targets protein kinase A (PKA) catalytic and regulatory subunits and protein phosphatase 1 (PP1), to the heterodimer KCNQ1-KCNE1. Interacts with PDE4DIP; this interaction stabilizes both proteins. In complex with PDE4DIP, recruits CAMSAP2 to the Golgi apparatus. Forms a pericentrosomal complex with CDK5RAP2, EB1/MAPRE1 and PDE4DIP; within this complex, MAPRE1 binding to CDK5RAP2 may be mediated by PDE4DIP. The interaction with PDE4DIP is isoform-specific. Interacts with MAPRE1 and MAPRE3. Interacts (via C-terminus) with CAMSAP2; this interaction is much stronger in the presence of PDE4DIP. Interacts with CAMSAP3. Interacts (via C-terminus) with the gamma-tubulin ring complex (gamma-TuRC), composed of gamma-tubulin, TUBGCP2, TUBGCP3, TUBGCP4, TUBGCP5 and TUBGCP6.</text>
</comment>
<comment type="subcellular location">
    <subcellularLocation>
        <location evidence="1">Golgi apparatus</location>
    </subcellularLocation>
    <subcellularLocation>
        <location evidence="1">Cytoplasm</location>
    </subcellularLocation>
    <subcellularLocation>
        <location evidence="1">Cytoplasm</location>
        <location evidence="1">Cytoskeleton</location>
        <location evidence="1">Microtubule organizing center</location>
        <location evidence="1">Centrosome</location>
    </subcellularLocation>
    <text evidence="1">Cytoplasmic in parietal cells. Recruited to the Golgi apparatus by GM130/GOLGA2. Localization at the centrosome versus Golgi apparatus may be cell type-dependent. Recruited to the centrosome in the presence of CDK5RAP2.</text>
</comment>
<comment type="tissue specificity">
    <text evidence="4">Highly expressed in gastric parietal cells.</text>
</comment>
<comment type="domain">
    <text evidence="6">RII-binding site, predicted to form an amphipathic helix, could participate in protein-protein interactions with a complementary surface on the R-subunit dimer.</text>
</comment>
<comment type="sequence caution" evidence="5">
    <conflict type="erroneous initiation">
        <sequence resource="EMBL-CDS" id="AAC35413"/>
    </conflict>
</comment>
<keyword id="KW-0175">Coiled coil</keyword>
<keyword id="KW-0963">Cytoplasm</keyword>
<keyword id="KW-0206">Cytoskeleton</keyword>
<keyword id="KW-0333">Golgi apparatus</keyword>
<keyword id="KW-1185">Reference proteome</keyword>
<organism>
    <name type="scientific">Oryctolagus cuniculus</name>
    <name type="common">Rabbit</name>
    <dbReference type="NCBI Taxonomy" id="9986"/>
    <lineage>
        <taxon>Eukaryota</taxon>
        <taxon>Metazoa</taxon>
        <taxon>Chordata</taxon>
        <taxon>Craniata</taxon>
        <taxon>Vertebrata</taxon>
        <taxon>Euteleostomi</taxon>
        <taxon>Mammalia</taxon>
        <taxon>Eutheria</taxon>
        <taxon>Euarchontoglires</taxon>
        <taxon>Glires</taxon>
        <taxon>Lagomorpha</taxon>
        <taxon>Leporidae</taxon>
        <taxon>Oryctolagus</taxon>
    </lineage>
</organism>
<evidence type="ECO:0000250" key="1">
    <source>
        <dbReference type="UniProtKB" id="Q99996"/>
    </source>
</evidence>
<evidence type="ECO:0000255" key="2"/>
<evidence type="ECO:0000256" key="3">
    <source>
        <dbReference type="SAM" id="MobiDB-lite"/>
    </source>
</evidence>
<evidence type="ECO:0000269" key="4">
    <source>
    </source>
</evidence>
<evidence type="ECO:0000305" key="5"/>
<evidence type="ECO:0000305" key="6">
    <source>
    </source>
</evidence>
<feature type="chain" id="PRO_0000064535" description="A-kinase anchor protein 9">
    <location>
        <begin position="1" status="less than"/>
        <end position="1087" status="greater than"/>
    </location>
</feature>
<feature type="region of interest" description="PKA-RII subunit binding domain">
    <location>
        <begin position="559"/>
        <end position="572"/>
    </location>
</feature>
<feature type="region of interest" description="Disordered" evidence="3">
    <location>
        <begin position="667"/>
        <end position="691"/>
    </location>
</feature>
<feature type="coiled-coil region" evidence="2">
    <location>
        <begin position="5"/>
        <end position="461"/>
    </location>
</feature>
<feature type="coiled-coil region" evidence="2">
    <location>
        <begin position="614"/>
        <end position="773"/>
    </location>
</feature>
<feature type="compositionally biased region" description="Basic and acidic residues" evidence="3">
    <location>
        <begin position="667"/>
        <end position="685"/>
    </location>
</feature>
<feature type="non-terminal residue">
    <location>
        <position position="1"/>
    </location>
</feature>
<feature type="non-terminal residue">
    <location>
        <position position="1087"/>
    </location>
</feature>
<accession>Q28628</accession>